<protein>
    <recommendedName>
        <fullName>Serine/threonine-protein kinase PAK 3</fullName>
        <ecNumber>2.7.11.1</ecNumber>
    </recommendedName>
    <alternativeName>
        <fullName>p21-activated kinase 3</fullName>
        <shortName>PAK-3</shortName>
    </alternativeName>
</protein>
<organism>
    <name type="scientific">Xenopus laevis</name>
    <name type="common">African clawed frog</name>
    <dbReference type="NCBI Taxonomy" id="8355"/>
    <lineage>
        <taxon>Eukaryota</taxon>
        <taxon>Metazoa</taxon>
        <taxon>Chordata</taxon>
        <taxon>Craniata</taxon>
        <taxon>Vertebrata</taxon>
        <taxon>Euteleostomi</taxon>
        <taxon>Amphibia</taxon>
        <taxon>Batrachia</taxon>
        <taxon>Anura</taxon>
        <taxon>Pipoidea</taxon>
        <taxon>Pipidae</taxon>
        <taxon>Xenopodinae</taxon>
        <taxon>Xenopus</taxon>
        <taxon>Xenopus</taxon>
    </lineage>
</organism>
<reference key="1">
    <citation type="journal article" date="2002" name="EMBO J.">
        <title>XPak3 promotes cell cycle withdrawal during primary neurogenesis in Xenopus laevis.</title>
        <authorList>
            <person name="Souopgui J."/>
            <person name="Solter M."/>
            <person name="Pieler T."/>
        </authorList>
    </citation>
    <scope>NUCLEOTIDE SEQUENCE [MRNA]</scope>
    <scope>FUNCTION</scope>
    <scope>INDUCTION</scope>
    <scope>DEVELOPMENTAL STAGE</scope>
</reference>
<reference key="2">
    <citation type="journal article" date="2013" name="Dev. Biol.">
        <title>Maturin is a novel protein required for differentiation during primary neurogenesis.</title>
        <authorList>
            <person name="Martinez-De Luna R.I."/>
            <person name="Ku R.Y."/>
            <person name="Lyou Y."/>
            <person name="Zuber M.E."/>
        </authorList>
    </citation>
    <scope>FUNCTION</scope>
    <scope>DEVELOPMENTAL STAGE</scope>
    <scope>DISRUPTION PHENOTYPE</scope>
</reference>
<proteinExistence type="evidence at transcript level"/>
<dbReference type="EC" id="2.7.11.1"/>
<dbReference type="EMBL" id="AF485330">
    <property type="protein sequence ID" value="AAN52281.1"/>
    <property type="molecule type" value="mRNA"/>
</dbReference>
<dbReference type="SMR" id="Q8AXB4"/>
<dbReference type="BioGRID" id="97076">
    <property type="interactions" value="1"/>
</dbReference>
<dbReference type="GeneID" id="378493"/>
<dbReference type="KEGG" id="xla:378493"/>
<dbReference type="AGR" id="Xenbase:XB-GENE-961767"/>
<dbReference type="CTD" id="378493"/>
<dbReference type="Xenbase" id="XB-GENE-961767">
    <property type="gene designation" value="pak3.L"/>
</dbReference>
<dbReference type="OrthoDB" id="1022360at2759"/>
<dbReference type="Proteomes" id="UP000186698">
    <property type="component" value="Chromosome 8L"/>
</dbReference>
<dbReference type="Bgee" id="378493">
    <property type="expression patterns" value="Expressed in internal ear and 19 other cell types or tissues"/>
</dbReference>
<dbReference type="GO" id="GO:0005737">
    <property type="term" value="C:cytoplasm"/>
    <property type="evidence" value="ECO:0000318"/>
    <property type="project" value="GO_Central"/>
</dbReference>
<dbReference type="GO" id="GO:0005524">
    <property type="term" value="F:ATP binding"/>
    <property type="evidence" value="ECO:0007669"/>
    <property type="project" value="UniProtKB-KW"/>
</dbReference>
<dbReference type="GO" id="GO:0046872">
    <property type="term" value="F:metal ion binding"/>
    <property type="evidence" value="ECO:0007669"/>
    <property type="project" value="UniProtKB-KW"/>
</dbReference>
<dbReference type="GO" id="GO:0106310">
    <property type="term" value="F:protein serine kinase activity"/>
    <property type="evidence" value="ECO:0007669"/>
    <property type="project" value="RHEA"/>
</dbReference>
<dbReference type="GO" id="GO:0004674">
    <property type="term" value="F:protein serine/threonine kinase activity"/>
    <property type="evidence" value="ECO:0000318"/>
    <property type="project" value="GO_Central"/>
</dbReference>
<dbReference type="GO" id="GO:0090017">
    <property type="term" value="P:anterior neural plate formation"/>
    <property type="evidence" value="ECO:0000314"/>
    <property type="project" value="UniProtKB"/>
</dbReference>
<dbReference type="GO" id="GO:0030154">
    <property type="term" value="P:cell differentiation"/>
    <property type="evidence" value="ECO:0007669"/>
    <property type="project" value="UniProtKB-KW"/>
</dbReference>
<dbReference type="GO" id="GO:0016477">
    <property type="term" value="P:cell migration"/>
    <property type="evidence" value="ECO:0000318"/>
    <property type="project" value="GO_Central"/>
</dbReference>
<dbReference type="GO" id="GO:0009267">
    <property type="term" value="P:cellular response to starvation"/>
    <property type="evidence" value="ECO:0000318"/>
    <property type="project" value="GO_Central"/>
</dbReference>
<dbReference type="GO" id="GO:0071570">
    <property type="term" value="P:cement gland development"/>
    <property type="evidence" value="ECO:0000315"/>
    <property type="project" value="UniProtKB"/>
</dbReference>
<dbReference type="GO" id="GO:0035556">
    <property type="term" value="P:intracellular signal transduction"/>
    <property type="evidence" value="ECO:0000318"/>
    <property type="project" value="GO_Central"/>
</dbReference>
<dbReference type="GO" id="GO:0007406">
    <property type="term" value="P:negative regulation of neuroblast proliferation"/>
    <property type="evidence" value="ECO:0000315"/>
    <property type="project" value="UniProtKB"/>
</dbReference>
<dbReference type="GO" id="GO:0021990">
    <property type="term" value="P:neural plate formation"/>
    <property type="evidence" value="ECO:0000315"/>
    <property type="project" value="UniProtKB"/>
</dbReference>
<dbReference type="GO" id="GO:0045666">
    <property type="term" value="P:positive regulation of neuron differentiation"/>
    <property type="evidence" value="ECO:0000314"/>
    <property type="project" value="UniProtKB"/>
</dbReference>
<dbReference type="GO" id="GO:0032956">
    <property type="term" value="P:regulation of actin cytoskeleton organization"/>
    <property type="evidence" value="ECO:0000318"/>
    <property type="project" value="GO_Central"/>
</dbReference>
<dbReference type="GO" id="GO:0050770">
    <property type="term" value="P:regulation of axonogenesis"/>
    <property type="evidence" value="ECO:0000318"/>
    <property type="project" value="GO_Central"/>
</dbReference>
<dbReference type="GO" id="GO:0051726">
    <property type="term" value="P:regulation of cell cycle"/>
    <property type="evidence" value="ECO:0000314"/>
    <property type="project" value="UniProtKB"/>
</dbReference>
<dbReference type="GO" id="GO:0043408">
    <property type="term" value="P:regulation of MAPK cascade"/>
    <property type="evidence" value="ECO:0000318"/>
    <property type="project" value="GO_Central"/>
</dbReference>
<dbReference type="CDD" id="cd01093">
    <property type="entry name" value="CRIB_PAK_like"/>
    <property type="match status" value="1"/>
</dbReference>
<dbReference type="CDD" id="cd06656">
    <property type="entry name" value="STKc_PAK3"/>
    <property type="match status" value="1"/>
</dbReference>
<dbReference type="FunFam" id="1.10.510.10:FF:000011">
    <property type="entry name" value="Non-specific serine/threonine protein kinase"/>
    <property type="match status" value="1"/>
</dbReference>
<dbReference type="FunFam" id="3.30.200.20:FF:000069">
    <property type="entry name" value="Non-specific serine/threonine protein kinase"/>
    <property type="match status" value="1"/>
</dbReference>
<dbReference type="FunFam" id="3.90.810.10:FF:000001">
    <property type="entry name" value="Non-specific serine/threonine protein kinase"/>
    <property type="match status" value="1"/>
</dbReference>
<dbReference type="Gene3D" id="3.90.810.10">
    <property type="entry name" value="CRIB domain"/>
    <property type="match status" value="1"/>
</dbReference>
<dbReference type="Gene3D" id="3.30.200.20">
    <property type="entry name" value="Phosphorylase Kinase, domain 1"/>
    <property type="match status" value="1"/>
</dbReference>
<dbReference type="Gene3D" id="1.10.510.10">
    <property type="entry name" value="Transferase(Phosphotransferase) domain 1"/>
    <property type="match status" value="1"/>
</dbReference>
<dbReference type="InterPro" id="IPR000095">
    <property type="entry name" value="CRIB_dom"/>
</dbReference>
<dbReference type="InterPro" id="IPR036936">
    <property type="entry name" value="CRIB_dom_sf"/>
</dbReference>
<dbReference type="InterPro" id="IPR011009">
    <property type="entry name" value="Kinase-like_dom_sf"/>
</dbReference>
<dbReference type="InterPro" id="IPR051931">
    <property type="entry name" value="PAK3-like"/>
</dbReference>
<dbReference type="InterPro" id="IPR033923">
    <property type="entry name" value="PAK_BD"/>
</dbReference>
<dbReference type="InterPro" id="IPR000719">
    <property type="entry name" value="Prot_kinase_dom"/>
</dbReference>
<dbReference type="InterPro" id="IPR017441">
    <property type="entry name" value="Protein_kinase_ATP_BS"/>
</dbReference>
<dbReference type="InterPro" id="IPR008271">
    <property type="entry name" value="Ser/Thr_kinase_AS"/>
</dbReference>
<dbReference type="InterPro" id="IPR035063">
    <property type="entry name" value="STK_PAK3"/>
</dbReference>
<dbReference type="PANTHER" id="PTHR45832">
    <property type="entry name" value="SERINE/THREONINE-PROTEIN KINASE SAMKA-RELATED-RELATED"/>
    <property type="match status" value="1"/>
</dbReference>
<dbReference type="PANTHER" id="PTHR45832:SF11">
    <property type="entry name" value="SERINE_THREONINE-PROTEIN KINASE PAK 3"/>
    <property type="match status" value="1"/>
</dbReference>
<dbReference type="Pfam" id="PF00786">
    <property type="entry name" value="PBD"/>
    <property type="match status" value="1"/>
</dbReference>
<dbReference type="Pfam" id="PF00069">
    <property type="entry name" value="Pkinase"/>
    <property type="match status" value="1"/>
</dbReference>
<dbReference type="SMART" id="SM00285">
    <property type="entry name" value="PBD"/>
    <property type="match status" value="1"/>
</dbReference>
<dbReference type="SMART" id="SM00220">
    <property type="entry name" value="S_TKc"/>
    <property type="match status" value="1"/>
</dbReference>
<dbReference type="SUPFAM" id="SSF56112">
    <property type="entry name" value="Protein kinase-like (PK-like)"/>
    <property type="match status" value="1"/>
</dbReference>
<dbReference type="PROSITE" id="PS50108">
    <property type="entry name" value="CRIB"/>
    <property type="match status" value="1"/>
</dbReference>
<dbReference type="PROSITE" id="PS00107">
    <property type="entry name" value="PROTEIN_KINASE_ATP"/>
    <property type="match status" value="1"/>
</dbReference>
<dbReference type="PROSITE" id="PS50011">
    <property type="entry name" value="PROTEIN_KINASE_DOM"/>
    <property type="match status" value="1"/>
</dbReference>
<dbReference type="PROSITE" id="PS00108">
    <property type="entry name" value="PROTEIN_KINASE_ST"/>
    <property type="match status" value="1"/>
</dbReference>
<sequence>MSDSVDIEEKPPAPPLRMNSNNRDSSALNHCSKPLPMAPEEKNKKARLRSIFPGGGDKTNKKKEKERPEISLPSDFEHTIHVGFDAVTGEFTPDLCGSQMGTGKLPEGIPEQWARLLQTSNITKLEQKKNPQAVLDVLKFYDSKETVNNQKYMSFTSGDKSAHGYIAAHSLNAKTASEPPLAPPVSEEEDEEEEEEEDDNEPPPVIAPRPEHTKSIYTRSVIEPVALTAPAKEASTSPVTPQPENSNSSTSTLYRNTDRQRKKSKMTDEEILEKLRSIVSVGDPKKKYTRFEKIGQGASGTVYTAIDIATGQEVAIKQMNLQQQPKKELIINEILVMRENKNPNIVNYLDSYLVGDELWVVMEYLAGGSLTDVVTETCMDEGQIAAVCRECLQALDFLHSNQVIHRDIKSDNILLGMDGSVKLTDFGFCAQITPEQSKRSTMVGTPYWMAPEVVTRKAYGPKVDIWSLGIMAIEMVEGEPPYLNENPLRALYLIATNGTPELQNPERLSAIFRDFLNRCLEMDVDRRGSAKELLQHPFLKIAKPLSSLTPLIIAAKEAIKNSSR</sequence>
<evidence type="ECO:0000250" key="1"/>
<evidence type="ECO:0000250" key="2">
    <source>
        <dbReference type="UniProtKB" id="Q61036"/>
    </source>
</evidence>
<evidence type="ECO:0000255" key="3">
    <source>
        <dbReference type="PROSITE-ProRule" id="PRU00057"/>
    </source>
</evidence>
<evidence type="ECO:0000255" key="4">
    <source>
        <dbReference type="PROSITE-ProRule" id="PRU00159"/>
    </source>
</evidence>
<evidence type="ECO:0000255" key="5">
    <source>
        <dbReference type="PROSITE-ProRule" id="PRU10027"/>
    </source>
</evidence>
<evidence type="ECO:0000256" key="6">
    <source>
        <dbReference type="SAM" id="MobiDB-lite"/>
    </source>
</evidence>
<evidence type="ECO:0000269" key="7">
    <source>
    </source>
</evidence>
<evidence type="ECO:0000269" key="8">
    <source>
    </source>
</evidence>
<evidence type="ECO:0000305" key="9"/>
<feature type="chain" id="PRO_0000424910" description="Serine/threonine-protein kinase PAK 3">
    <location>
        <begin position="1"/>
        <end position="564"/>
    </location>
</feature>
<feature type="domain" description="CRIB" evidence="3">
    <location>
        <begin position="70"/>
        <end position="83"/>
    </location>
</feature>
<feature type="domain" description="Protein kinase" evidence="4">
    <location>
        <begin position="288"/>
        <end position="539"/>
    </location>
</feature>
<feature type="region of interest" description="Disordered" evidence="6">
    <location>
        <begin position="1"/>
        <end position="70"/>
    </location>
</feature>
<feature type="region of interest" description="Autoregulatory region" evidence="1">
    <location>
        <begin position="65"/>
        <end position="150"/>
    </location>
</feature>
<feature type="region of interest" description="GTPase-binding" evidence="1">
    <location>
        <begin position="65"/>
        <end position="123"/>
    </location>
</feature>
<feature type="region of interest" description="Linker" evidence="1">
    <location>
        <begin position="84"/>
        <end position="287"/>
    </location>
</feature>
<feature type="region of interest" description="Disordered" evidence="6">
    <location>
        <begin position="172"/>
        <end position="216"/>
    </location>
</feature>
<feature type="region of interest" description="Disordered" evidence="6">
    <location>
        <begin position="229"/>
        <end position="267"/>
    </location>
</feature>
<feature type="compositionally biased region" description="Polar residues" evidence="6">
    <location>
        <begin position="18"/>
        <end position="29"/>
    </location>
</feature>
<feature type="compositionally biased region" description="Acidic residues" evidence="6">
    <location>
        <begin position="186"/>
        <end position="201"/>
    </location>
</feature>
<feature type="compositionally biased region" description="Polar residues" evidence="6">
    <location>
        <begin position="234"/>
        <end position="255"/>
    </location>
</feature>
<feature type="active site" description="Proton acceptor" evidence="4 5">
    <location>
        <position position="407"/>
    </location>
</feature>
<feature type="binding site" evidence="4">
    <location>
        <begin position="294"/>
        <end position="302"/>
    </location>
    <ligand>
        <name>ATP</name>
        <dbReference type="ChEBI" id="CHEBI:30616"/>
    </ligand>
</feature>
<feature type="binding site" evidence="4">
    <location>
        <position position="317"/>
    </location>
    <ligand>
        <name>ATP</name>
        <dbReference type="ChEBI" id="CHEBI:30616"/>
    </ligand>
</feature>
<accession>Q8AXB4</accession>
<name>PAK3_XENLA</name>
<gene>
    <name type="primary">pak3</name>
</gene>
<keyword id="KW-0067">ATP-binding</keyword>
<keyword id="KW-0131">Cell cycle</keyword>
<keyword id="KW-0963">Cytoplasm</keyword>
<keyword id="KW-0217">Developmental protein</keyword>
<keyword id="KW-0221">Differentiation</keyword>
<keyword id="KW-0338">Growth arrest</keyword>
<keyword id="KW-0418">Kinase</keyword>
<keyword id="KW-0460">Magnesium</keyword>
<keyword id="KW-0479">Metal-binding</keyword>
<keyword id="KW-0547">Nucleotide-binding</keyword>
<keyword id="KW-1185">Reference proteome</keyword>
<keyword id="KW-0723">Serine/threonine-protein kinase</keyword>
<keyword id="KW-0808">Transferase</keyword>
<comment type="function">
    <text evidence="2 7 8">Serine/threonine protein kinase that plays a role in a variety of different signaling pathways. Involved in early neuronal development; required for cell cycle exit and differentiation of primary neurons. May be required for the formation of dendritic spines and excitatory synapses (By similarity). Cooperates synergistically with mturn to promote primary neural differentiation within the neural plate. Involved in the cement gland formation.</text>
</comment>
<comment type="catalytic activity">
    <reaction>
        <text>L-seryl-[protein] + ATP = O-phospho-L-seryl-[protein] + ADP + H(+)</text>
        <dbReference type="Rhea" id="RHEA:17989"/>
        <dbReference type="Rhea" id="RHEA-COMP:9863"/>
        <dbReference type="Rhea" id="RHEA-COMP:11604"/>
        <dbReference type="ChEBI" id="CHEBI:15378"/>
        <dbReference type="ChEBI" id="CHEBI:29999"/>
        <dbReference type="ChEBI" id="CHEBI:30616"/>
        <dbReference type="ChEBI" id="CHEBI:83421"/>
        <dbReference type="ChEBI" id="CHEBI:456216"/>
        <dbReference type="EC" id="2.7.11.1"/>
    </reaction>
</comment>
<comment type="catalytic activity">
    <reaction>
        <text>L-threonyl-[protein] + ATP = O-phospho-L-threonyl-[protein] + ADP + H(+)</text>
        <dbReference type="Rhea" id="RHEA:46608"/>
        <dbReference type="Rhea" id="RHEA-COMP:11060"/>
        <dbReference type="Rhea" id="RHEA-COMP:11605"/>
        <dbReference type="ChEBI" id="CHEBI:15378"/>
        <dbReference type="ChEBI" id="CHEBI:30013"/>
        <dbReference type="ChEBI" id="CHEBI:30616"/>
        <dbReference type="ChEBI" id="CHEBI:61977"/>
        <dbReference type="ChEBI" id="CHEBI:456216"/>
        <dbReference type="EC" id="2.7.11.1"/>
    </reaction>
</comment>
<comment type="cofactor">
    <cofactor evidence="1">
        <name>Mg(2+)</name>
        <dbReference type="ChEBI" id="CHEBI:18420"/>
    </cofactor>
</comment>
<comment type="subcellular location">
    <subcellularLocation>
        <location evidence="1">Cytoplasm</location>
    </subcellularLocation>
</comment>
<comment type="developmental stage">
    <text evidence="7 8">Expressed from the egg to the tailbud stage embryo. Expressed at late gastrula/early neurula stages of development within the posterior neuroectoderm. Expressed in primary neurons as they differentiate in the neural plate at stage 14.5 in the area of the trigeminal placodes. Expressed in the cement gland at stage 17. Expressed during later phases in the notochord in tissues derived from dorsolateral cranial placodes.</text>
</comment>
<comment type="induction">
    <text evidence="7">Up-regulated by the proneural transcription factors Neurog2, Neurod1 and Ebf3. Down-regulated by the Notch pathway.</text>
</comment>
<comment type="disruption phenotype">
    <text evidence="8">Morpholino knockdown of the protein causes inhibition of neuronal differentiation and an accumulation of neuronal progenitor cells in the anterior neural plate.</text>
</comment>
<comment type="similarity">
    <text evidence="9">Belongs to the protein kinase superfamily. STE Ser/Thr protein kinase family. STE20 subfamily.</text>
</comment>